<accession>Q7MHQ2</accession>
<evidence type="ECO:0000255" key="1">
    <source>
        <dbReference type="HAMAP-Rule" id="MF_00599"/>
    </source>
</evidence>
<feature type="chain" id="PRO_0000214460" description="Cell division protein FtsB">
    <location>
        <begin position="1"/>
        <end position="93"/>
    </location>
</feature>
<feature type="topological domain" description="Cytoplasmic" evidence="1">
    <location>
        <begin position="1"/>
        <end position="3"/>
    </location>
</feature>
<feature type="transmembrane region" description="Helical" evidence="1">
    <location>
        <begin position="4"/>
        <end position="21"/>
    </location>
</feature>
<feature type="topological domain" description="Periplasmic" evidence="1">
    <location>
        <begin position="22"/>
        <end position="93"/>
    </location>
</feature>
<feature type="coiled-coil region" evidence="1">
    <location>
        <begin position="42"/>
        <end position="75"/>
    </location>
</feature>
<reference key="1">
    <citation type="journal article" date="2003" name="Genome Res.">
        <title>Comparative genome analysis of Vibrio vulnificus, a marine pathogen.</title>
        <authorList>
            <person name="Chen C.-Y."/>
            <person name="Wu K.-M."/>
            <person name="Chang Y.-C."/>
            <person name="Chang C.-H."/>
            <person name="Tsai H.-C."/>
            <person name="Liao T.-L."/>
            <person name="Liu Y.-M."/>
            <person name="Chen H.-J."/>
            <person name="Shen A.B.-T."/>
            <person name="Li J.-C."/>
            <person name="Su T.-L."/>
            <person name="Shao C.-P."/>
            <person name="Lee C.-T."/>
            <person name="Hor L.-I."/>
            <person name="Tsai S.-F."/>
        </authorList>
    </citation>
    <scope>NUCLEOTIDE SEQUENCE [LARGE SCALE GENOMIC DNA]</scope>
    <source>
        <strain>YJ016</strain>
    </source>
</reference>
<comment type="function">
    <text evidence="1">Essential cell division protein. May link together the upstream cell division proteins, which are predominantly cytoplasmic, with the downstream cell division proteins, which are predominantly periplasmic.</text>
</comment>
<comment type="subunit">
    <text evidence="1">Part of a complex composed of FtsB, FtsL and FtsQ.</text>
</comment>
<comment type="subcellular location">
    <subcellularLocation>
        <location evidence="1">Cell inner membrane</location>
        <topology evidence="1">Single-pass type II membrane protein</topology>
    </subcellularLocation>
    <text evidence="1">Localizes to the division septum.</text>
</comment>
<comment type="similarity">
    <text evidence="1">Belongs to the FtsB family.</text>
</comment>
<name>FTSB_VIBVY</name>
<organism>
    <name type="scientific">Vibrio vulnificus (strain YJ016)</name>
    <dbReference type="NCBI Taxonomy" id="196600"/>
    <lineage>
        <taxon>Bacteria</taxon>
        <taxon>Pseudomonadati</taxon>
        <taxon>Pseudomonadota</taxon>
        <taxon>Gammaproteobacteria</taxon>
        <taxon>Vibrionales</taxon>
        <taxon>Vibrionaceae</taxon>
        <taxon>Vibrio</taxon>
    </lineage>
</organism>
<proteinExistence type="inferred from homology"/>
<sequence length="93" mass="10908">MRLFILVLTLLFGWLQYTLWFGKNGVSDYYTIESDIEAQQLVNTKLQARNSEMYAEIDDLKQGLDAIEERARHELGMLKEGETFYRIVGEENQ</sequence>
<gene>
    <name evidence="1" type="primary">ftsB</name>
    <name type="ordered locus">VV2817</name>
</gene>
<keyword id="KW-0131">Cell cycle</keyword>
<keyword id="KW-0132">Cell division</keyword>
<keyword id="KW-0997">Cell inner membrane</keyword>
<keyword id="KW-1003">Cell membrane</keyword>
<keyword id="KW-0175">Coiled coil</keyword>
<keyword id="KW-0472">Membrane</keyword>
<keyword id="KW-0812">Transmembrane</keyword>
<keyword id="KW-1133">Transmembrane helix</keyword>
<dbReference type="EMBL" id="BA000037">
    <property type="protein sequence ID" value="BAC95581.1"/>
    <property type="molecule type" value="Genomic_DNA"/>
</dbReference>
<dbReference type="RefSeq" id="WP_011079514.1">
    <property type="nucleotide sequence ID" value="NC_005139.1"/>
</dbReference>
<dbReference type="SMR" id="Q7MHQ2"/>
<dbReference type="STRING" id="672.VV93_v1c25260"/>
<dbReference type="KEGG" id="vvy:VV2817"/>
<dbReference type="eggNOG" id="COG2919">
    <property type="taxonomic scope" value="Bacteria"/>
</dbReference>
<dbReference type="HOGENOM" id="CLU_134863_5_2_6"/>
<dbReference type="Proteomes" id="UP000002675">
    <property type="component" value="Chromosome I"/>
</dbReference>
<dbReference type="GO" id="GO:0032153">
    <property type="term" value="C:cell division site"/>
    <property type="evidence" value="ECO:0007669"/>
    <property type="project" value="UniProtKB-UniRule"/>
</dbReference>
<dbReference type="GO" id="GO:0030428">
    <property type="term" value="C:cell septum"/>
    <property type="evidence" value="ECO:0007669"/>
    <property type="project" value="TreeGrafter"/>
</dbReference>
<dbReference type="GO" id="GO:0005886">
    <property type="term" value="C:plasma membrane"/>
    <property type="evidence" value="ECO:0007669"/>
    <property type="project" value="UniProtKB-SubCell"/>
</dbReference>
<dbReference type="GO" id="GO:0043093">
    <property type="term" value="P:FtsZ-dependent cytokinesis"/>
    <property type="evidence" value="ECO:0007669"/>
    <property type="project" value="UniProtKB-UniRule"/>
</dbReference>
<dbReference type="Gene3D" id="1.20.5.400">
    <property type="match status" value="1"/>
</dbReference>
<dbReference type="HAMAP" id="MF_00599">
    <property type="entry name" value="FtsB"/>
    <property type="match status" value="1"/>
</dbReference>
<dbReference type="InterPro" id="IPR023081">
    <property type="entry name" value="Cell_div_FtsB"/>
</dbReference>
<dbReference type="InterPro" id="IPR007060">
    <property type="entry name" value="FtsL/DivIC"/>
</dbReference>
<dbReference type="NCBIfam" id="NF002058">
    <property type="entry name" value="PRK00888.1"/>
    <property type="match status" value="1"/>
</dbReference>
<dbReference type="PANTHER" id="PTHR37485">
    <property type="entry name" value="CELL DIVISION PROTEIN FTSB"/>
    <property type="match status" value="1"/>
</dbReference>
<dbReference type="PANTHER" id="PTHR37485:SF1">
    <property type="entry name" value="CELL DIVISION PROTEIN FTSB"/>
    <property type="match status" value="1"/>
</dbReference>
<dbReference type="Pfam" id="PF04977">
    <property type="entry name" value="DivIC"/>
    <property type="match status" value="1"/>
</dbReference>
<protein>
    <recommendedName>
        <fullName evidence="1">Cell division protein FtsB</fullName>
    </recommendedName>
</protein>